<protein>
    <recommendedName>
        <fullName evidence="1">Elongation factor 4</fullName>
        <shortName evidence="1">EF-4</shortName>
        <ecNumber evidence="1">3.6.5.n1</ecNumber>
    </recommendedName>
    <alternativeName>
        <fullName evidence="1">Ribosomal back-translocase LepA</fullName>
    </alternativeName>
</protein>
<keyword id="KW-0997">Cell inner membrane</keyword>
<keyword id="KW-1003">Cell membrane</keyword>
<keyword id="KW-0342">GTP-binding</keyword>
<keyword id="KW-0378">Hydrolase</keyword>
<keyword id="KW-0472">Membrane</keyword>
<keyword id="KW-0547">Nucleotide-binding</keyword>
<keyword id="KW-0648">Protein biosynthesis</keyword>
<dbReference type="EC" id="3.6.5.n1" evidence="1"/>
<dbReference type="EMBL" id="CP001113">
    <property type="protein sequence ID" value="ACF63311.1"/>
    <property type="molecule type" value="Genomic_DNA"/>
</dbReference>
<dbReference type="RefSeq" id="WP_000790154.1">
    <property type="nucleotide sequence ID" value="NZ_CCMR01000001.1"/>
</dbReference>
<dbReference type="SMR" id="B4T1G0"/>
<dbReference type="KEGG" id="see:SNSL254_A2787"/>
<dbReference type="HOGENOM" id="CLU_009995_3_3_6"/>
<dbReference type="Proteomes" id="UP000008824">
    <property type="component" value="Chromosome"/>
</dbReference>
<dbReference type="GO" id="GO:0005886">
    <property type="term" value="C:plasma membrane"/>
    <property type="evidence" value="ECO:0007669"/>
    <property type="project" value="UniProtKB-SubCell"/>
</dbReference>
<dbReference type="GO" id="GO:0005525">
    <property type="term" value="F:GTP binding"/>
    <property type="evidence" value="ECO:0007669"/>
    <property type="project" value="UniProtKB-UniRule"/>
</dbReference>
<dbReference type="GO" id="GO:0003924">
    <property type="term" value="F:GTPase activity"/>
    <property type="evidence" value="ECO:0007669"/>
    <property type="project" value="UniProtKB-UniRule"/>
</dbReference>
<dbReference type="GO" id="GO:0097216">
    <property type="term" value="F:guanosine tetraphosphate binding"/>
    <property type="evidence" value="ECO:0007669"/>
    <property type="project" value="UniProtKB-ARBA"/>
</dbReference>
<dbReference type="GO" id="GO:0043022">
    <property type="term" value="F:ribosome binding"/>
    <property type="evidence" value="ECO:0007669"/>
    <property type="project" value="UniProtKB-UniRule"/>
</dbReference>
<dbReference type="GO" id="GO:0003746">
    <property type="term" value="F:translation elongation factor activity"/>
    <property type="evidence" value="ECO:0007669"/>
    <property type="project" value="UniProtKB-UniRule"/>
</dbReference>
<dbReference type="GO" id="GO:0045727">
    <property type="term" value="P:positive regulation of translation"/>
    <property type="evidence" value="ECO:0007669"/>
    <property type="project" value="UniProtKB-UniRule"/>
</dbReference>
<dbReference type="CDD" id="cd03699">
    <property type="entry name" value="EF4_II"/>
    <property type="match status" value="1"/>
</dbReference>
<dbReference type="CDD" id="cd16260">
    <property type="entry name" value="EF4_III"/>
    <property type="match status" value="1"/>
</dbReference>
<dbReference type="CDD" id="cd01890">
    <property type="entry name" value="LepA"/>
    <property type="match status" value="1"/>
</dbReference>
<dbReference type="CDD" id="cd03709">
    <property type="entry name" value="lepA_C"/>
    <property type="match status" value="1"/>
</dbReference>
<dbReference type="FunFam" id="3.30.70.240:FF:000005">
    <property type="entry name" value="Elongation factor 4"/>
    <property type="match status" value="1"/>
</dbReference>
<dbReference type="FunFam" id="3.40.50.300:FF:000078">
    <property type="entry name" value="Elongation factor 4"/>
    <property type="match status" value="1"/>
</dbReference>
<dbReference type="FunFam" id="2.40.30.10:FF:000015">
    <property type="entry name" value="Translation factor GUF1, mitochondrial"/>
    <property type="match status" value="1"/>
</dbReference>
<dbReference type="FunFam" id="3.30.70.2570:FF:000001">
    <property type="entry name" value="Translation factor GUF1, mitochondrial"/>
    <property type="match status" value="1"/>
</dbReference>
<dbReference type="FunFam" id="3.30.70.870:FF:000004">
    <property type="entry name" value="Translation factor GUF1, mitochondrial"/>
    <property type="match status" value="1"/>
</dbReference>
<dbReference type="Gene3D" id="3.30.70.240">
    <property type="match status" value="1"/>
</dbReference>
<dbReference type="Gene3D" id="3.30.70.2570">
    <property type="entry name" value="Elongation factor 4, C-terminal domain"/>
    <property type="match status" value="1"/>
</dbReference>
<dbReference type="Gene3D" id="3.30.70.870">
    <property type="entry name" value="Elongation Factor G (Translational Gtpase), domain 3"/>
    <property type="match status" value="1"/>
</dbReference>
<dbReference type="Gene3D" id="3.40.50.300">
    <property type="entry name" value="P-loop containing nucleotide triphosphate hydrolases"/>
    <property type="match status" value="1"/>
</dbReference>
<dbReference type="Gene3D" id="2.40.30.10">
    <property type="entry name" value="Translation factors"/>
    <property type="match status" value="1"/>
</dbReference>
<dbReference type="HAMAP" id="MF_00071">
    <property type="entry name" value="LepA"/>
    <property type="match status" value="1"/>
</dbReference>
<dbReference type="InterPro" id="IPR006297">
    <property type="entry name" value="EF-4"/>
</dbReference>
<dbReference type="InterPro" id="IPR035647">
    <property type="entry name" value="EFG_III/V"/>
</dbReference>
<dbReference type="InterPro" id="IPR000640">
    <property type="entry name" value="EFG_V-like"/>
</dbReference>
<dbReference type="InterPro" id="IPR004161">
    <property type="entry name" value="EFTu-like_2"/>
</dbReference>
<dbReference type="InterPro" id="IPR031157">
    <property type="entry name" value="G_TR_CS"/>
</dbReference>
<dbReference type="InterPro" id="IPR038363">
    <property type="entry name" value="LepA_C_sf"/>
</dbReference>
<dbReference type="InterPro" id="IPR013842">
    <property type="entry name" value="LepA_CTD"/>
</dbReference>
<dbReference type="InterPro" id="IPR035654">
    <property type="entry name" value="LepA_IV"/>
</dbReference>
<dbReference type="InterPro" id="IPR027417">
    <property type="entry name" value="P-loop_NTPase"/>
</dbReference>
<dbReference type="InterPro" id="IPR005225">
    <property type="entry name" value="Small_GTP-bd"/>
</dbReference>
<dbReference type="InterPro" id="IPR000795">
    <property type="entry name" value="T_Tr_GTP-bd_dom"/>
</dbReference>
<dbReference type="NCBIfam" id="TIGR01393">
    <property type="entry name" value="lepA"/>
    <property type="match status" value="1"/>
</dbReference>
<dbReference type="NCBIfam" id="TIGR00231">
    <property type="entry name" value="small_GTP"/>
    <property type="match status" value="1"/>
</dbReference>
<dbReference type="PANTHER" id="PTHR43512:SF4">
    <property type="entry name" value="TRANSLATION FACTOR GUF1 HOMOLOG, CHLOROPLASTIC"/>
    <property type="match status" value="1"/>
</dbReference>
<dbReference type="PANTHER" id="PTHR43512">
    <property type="entry name" value="TRANSLATION FACTOR GUF1-RELATED"/>
    <property type="match status" value="1"/>
</dbReference>
<dbReference type="Pfam" id="PF00679">
    <property type="entry name" value="EFG_C"/>
    <property type="match status" value="1"/>
</dbReference>
<dbReference type="Pfam" id="PF00009">
    <property type="entry name" value="GTP_EFTU"/>
    <property type="match status" value="1"/>
</dbReference>
<dbReference type="Pfam" id="PF03144">
    <property type="entry name" value="GTP_EFTU_D2"/>
    <property type="match status" value="1"/>
</dbReference>
<dbReference type="Pfam" id="PF06421">
    <property type="entry name" value="LepA_C"/>
    <property type="match status" value="1"/>
</dbReference>
<dbReference type="PRINTS" id="PR00315">
    <property type="entry name" value="ELONGATNFCT"/>
</dbReference>
<dbReference type="SUPFAM" id="SSF54980">
    <property type="entry name" value="EF-G C-terminal domain-like"/>
    <property type="match status" value="2"/>
</dbReference>
<dbReference type="SUPFAM" id="SSF52540">
    <property type="entry name" value="P-loop containing nucleoside triphosphate hydrolases"/>
    <property type="match status" value="1"/>
</dbReference>
<dbReference type="PROSITE" id="PS00301">
    <property type="entry name" value="G_TR_1"/>
    <property type="match status" value="1"/>
</dbReference>
<dbReference type="PROSITE" id="PS51722">
    <property type="entry name" value="G_TR_2"/>
    <property type="match status" value="1"/>
</dbReference>
<organism>
    <name type="scientific">Salmonella newport (strain SL254)</name>
    <dbReference type="NCBI Taxonomy" id="423368"/>
    <lineage>
        <taxon>Bacteria</taxon>
        <taxon>Pseudomonadati</taxon>
        <taxon>Pseudomonadota</taxon>
        <taxon>Gammaproteobacteria</taxon>
        <taxon>Enterobacterales</taxon>
        <taxon>Enterobacteriaceae</taxon>
        <taxon>Salmonella</taxon>
    </lineage>
</organism>
<evidence type="ECO:0000255" key="1">
    <source>
        <dbReference type="HAMAP-Rule" id="MF_00071"/>
    </source>
</evidence>
<comment type="function">
    <text evidence="1">Required for accurate and efficient protein synthesis under certain stress conditions. May act as a fidelity factor of the translation reaction, by catalyzing a one-codon backward translocation of tRNAs on improperly translocated ribosomes. Back-translocation proceeds from a post-translocation (POST) complex to a pre-translocation (PRE) complex, thus giving elongation factor G a second chance to translocate the tRNAs correctly. Binds to ribosomes in a GTP-dependent manner.</text>
</comment>
<comment type="catalytic activity">
    <reaction evidence="1">
        <text>GTP + H2O = GDP + phosphate + H(+)</text>
        <dbReference type="Rhea" id="RHEA:19669"/>
        <dbReference type="ChEBI" id="CHEBI:15377"/>
        <dbReference type="ChEBI" id="CHEBI:15378"/>
        <dbReference type="ChEBI" id="CHEBI:37565"/>
        <dbReference type="ChEBI" id="CHEBI:43474"/>
        <dbReference type="ChEBI" id="CHEBI:58189"/>
        <dbReference type="EC" id="3.6.5.n1"/>
    </reaction>
</comment>
<comment type="subcellular location">
    <subcellularLocation>
        <location evidence="1">Cell inner membrane</location>
        <topology evidence="1">Peripheral membrane protein</topology>
        <orientation evidence="1">Cytoplasmic side</orientation>
    </subcellularLocation>
</comment>
<comment type="similarity">
    <text evidence="1">Belongs to the TRAFAC class translation factor GTPase superfamily. Classic translation factor GTPase family. LepA subfamily.</text>
</comment>
<sequence length="599" mass="66538">MKNIRNFSIIAHIDHGKSTLSDRIIQICGGLSDREMEAQVLDSMDLERERGITIKAQSVTLDFKASDGETYQLNFIDTPGHVDFSYEVSRSLAACEGALLVVDAGQGVEAQTLANCYTAMEMDLEVVPVLNKIDLPAADPERVAEEIEDIVGIDATDAVRCSAKTGVGVTDVLERLVRDIPPPQGDPDGPLQALIIDSWFDNYLGVVSLVRIKNGTMRKGDKIKVMSTGQTYNADRLGIFTPKQVDRTELKCGEVGWLVCAIKDILGAPVGDTLTSARNPAEKALPGFKKVKPQVYAGLFPVSSDDYESFRDALGKLSLNDASLFYEPESSSALGFGFRCGFLGLLHMEIIQERLEREYDLDLITTAPTVVYEVETTAKETIYVDSPSKLPPLNNIYELREPIAECHMLLPQAYLGNVITLCIEKRGVQTNMVYHGNQVALTYEIPMAEVVLDFFDRLKSTSRGYASLDYNFKRFQASDMVRVDVLINNERVDALALITHRDNSQSRGRELVEKMKDLIPRQQFDIAIQAAIGTHIIARSTVKQLRKNVLAKCYGGDISRKKKLLQKQKEGKKRMKQIGNVELPQEAFLAILHVGKDNK</sequence>
<accession>B4T1G0</accession>
<proteinExistence type="inferred from homology"/>
<gene>
    <name evidence="1" type="primary">lepA</name>
    <name type="ordered locus">SNSL254_A2787</name>
</gene>
<reference key="1">
    <citation type="journal article" date="2011" name="J. Bacteriol.">
        <title>Comparative genomics of 28 Salmonella enterica isolates: evidence for CRISPR-mediated adaptive sublineage evolution.</title>
        <authorList>
            <person name="Fricke W.F."/>
            <person name="Mammel M.K."/>
            <person name="McDermott P.F."/>
            <person name="Tartera C."/>
            <person name="White D.G."/>
            <person name="Leclerc J.E."/>
            <person name="Ravel J."/>
            <person name="Cebula T.A."/>
        </authorList>
    </citation>
    <scope>NUCLEOTIDE SEQUENCE [LARGE SCALE GENOMIC DNA]</scope>
    <source>
        <strain>SL254</strain>
    </source>
</reference>
<name>LEPA_SALNS</name>
<feature type="chain" id="PRO_1000092443" description="Elongation factor 4">
    <location>
        <begin position="1"/>
        <end position="599"/>
    </location>
</feature>
<feature type="domain" description="tr-type G">
    <location>
        <begin position="2"/>
        <end position="184"/>
    </location>
</feature>
<feature type="binding site" evidence="1">
    <location>
        <begin position="14"/>
        <end position="19"/>
    </location>
    <ligand>
        <name>GTP</name>
        <dbReference type="ChEBI" id="CHEBI:37565"/>
    </ligand>
</feature>
<feature type="binding site" evidence="1">
    <location>
        <begin position="131"/>
        <end position="134"/>
    </location>
    <ligand>
        <name>GTP</name>
        <dbReference type="ChEBI" id="CHEBI:37565"/>
    </ligand>
</feature>